<gene>
    <name evidence="9" type="primary">nhr-209</name>
    <name evidence="9" type="ORF">R07B7.16</name>
</gene>
<protein>
    <recommendedName>
        <fullName evidence="6">Nuclear hormone receptor family member nhr-209</fullName>
    </recommendedName>
</protein>
<comment type="function">
    <text evidence="1 5">Transcriptional regulator (By similarity). Plays a role in modulation of lifespan and immunity (PubMed:29748542).</text>
</comment>
<comment type="subcellular location">
    <subcellularLocation>
        <location evidence="4">Nucleus</location>
    </subcellularLocation>
</comment>
<comment type="induction">
    <text evidence="5">Transcription up-regulated in response to intestinal colonization by probiotic Lactobacillus fermentum strain JDFM216.</text>
</comment>
<comment type="similarity">
    <text evidence="4 6">Belongs to the nuclear hormone receptor family.</text>
</comment>
<organism evidence="7 8">
    <name type="scientific">Caenorhabditis elegans</name>
    <dbReference type="NCBI Taxonomy" id="6239"/>
    <lineage>
        <taxon>Eukaryota</taxon>
        <taxon>Metazoa</taxon>
        <taxon>Ecdysozoa</taxon>
        <taxon>Nematoda</taxon>
        <taxon>Chromadorea</taxon>
        <taxon>Rhabditida</taxon>
        <taxon>Rhabditina</taxon>
        <taxon>Rhabditomorpha</taxon>
        <taxon>Rhabditoidea</taxon>
        <taxon>Rhabditidae</taxon>
        <taxon>Peloderinae</taxon>
        <taxon>Caenorhabditis</taxon>
    </lineage>
</organism>
<keyword id="KW-0238">DNA-binding</keyword>
<keyword id="KW-0479">Metal-binding</keyword>
<keyword id="KW-0539">Nucleus</keyword>
<keyword id="KW-0675">Receptor</keyword>
<keyword id="KW-1185">Reference proteome</keyword>
<keyword id="KW-0804">Transcription</keyword>
<keyword id="KW-0805">Transcription regulation</keyword>
<keyword id="KW-0862">Zinc</keyword>
<keyword id="KW-0863">Zinc-finger</keyword>
<dbReference type="EMBL" id="BX284605">
    <property type="protein sequence ID" value="CAB00125.2"/>
    <property type="molecule type" value="Genomic_DNA"/>
</dbReference>
<dbReference type="RefSeq" id="NP_506036.2">
    <property type="nucleotide sequence ID" value="NM_073635.4"/>
</dbReference>
<dbReference type="SMR" id="Q21806"/>
<dbReference type="FunCoup" id="Q21806">
    <property type="interactions" value="150"/>
</dbReference>
<dbReference type="STRING" id="6239.R07B7.16.1"/>
<dbReference type="PaxDb" id="6239-R07B7.16"/>
<dbReference type="EnsemblMetazoa" id="R07B7.16.1">
    <property type="protein sequence ID" value="R07B7.16.1"/>
    <property type="gene ID" value="WBGene00011100"/>
</dbReference>
<dbReference type="GeneID" id="187663"/>
<dbReference type="KEGG" id="cel:CELE_R07B7.16"/>
<dbReference type="UCSC" id="R07B7.16">
    <property type="organism name" value="c. elegans"/>
</dbReference>
<dbReference type="AGR" id="WB:WBGene00011100"/>
<dbReference type="CTD" id="187663"/>
<dbReference type="WormBase" id="R07B7.16">
    <property type="protein sequence ID" value="CE42934"/>
    <property type="gene ID" value="WBGene00011100"/>
    <property type="gene designation" value="nhr-209"/>
</dbReference>
<dbReference type="eggNOG" id="ENOG502TM8U">
    <property type="taxonomic scope" value="Eukaryota"/>
</dbReference>
<dbReference type="GeneTree" id="ENSGT00970000195934"/>
<dbReference type="HOGENOM" id="CLU_007368_3_1_1"/>
<dbReference type="InParanoid" id="Q21806"/>
<dbReference type="OMA" id="YMHSALL"/>
<dbReference type="OrthoDB" id="9984314at2759"/>
<dbReference type="PhylomeDB" id="Q21806"/>
<dbReference type="Reactome" id="R-CEL-383280">
    <property type="pathway name" value="Nuclear Receptor transcription pathway"/>
</dbReference>
<dbReference type="Reactome" id="R-CEL-5362517">
    <property type="pathway name" value="Signaling by Retinoic Acid"/>
</dbReference>
<dbReference type="PRO" id="PR:Q21806"/>
<dbReference type="Proteomes" id="UP000001940">
    <property type="component" value="Chromosome V"/>
</dbReference>
<dbReference type="Bgee" id="WBGene00011100">
    <property type="expression patterns" value="Expressed in pharyngeal muscle cell (C elegans) and 3 other cell types or tissues"/>
</dbReference>
<dbReference type="GO" id="GO:0005634">
    <property type="term" value="C:nucleus"/>
    <property type="evidence" value="ECO:0007669"/>
    <property type="project" value="UniProtKB-SubCell"/>
</dbReference>
<dbReference type="GO" id="GO:0004879">
    <property type="term" value="F:nuclear receptor activity"/>
    <property type="evidence" value="ECO:0000318"/>
    <property type="project" value="GO_Central"/>
</dbReference>
<dbReference type="GO" id="GO:0000978">
    <property type="term" value="F:RNA polymerase II cis-regulatory region sequence-specific DNA binding"/>
    <property type="evidence" value="ECO:0000318"/>
    <property type="project" value="GO_Central"/>
</dbReference>
<dbReference type="GO" id="GO:0008270">
    <property type="term" value="F:zinc ion binding"/>
    <property type="evidence" value="ECO:0007669"/>
    <property type="project" value="UniProtKB-KW"/>
</dbReference>
<dbReference type="GO" id="GO:0030154">
    <property type="term" value="P:cell differentiation"/>
    <property type="evidence" value="ECO:0000318"/>
    <property type="project" value="GO_Central"/>
</dbReference>
<dbReference type="GO" id="GO:0006357">
    <property type="term" value="P:regulation of transcription by RNA polymerase II"/>
    <property type="evidence" value="ECO:0000318"/>
    <property type="project" value="GO_Central"/>
</dbReference>
<dbReference type="CDD" id="cd06960">
    <property type="entry name" value="NR_DBD_HNF4A"/>
    <property type="match status" value="1"/>
</dbReference>
<dbReference type="FunFam" id="1.10.565.10:FF:000115">
    <property type="entry name" value="Nuclear Hormone Receptor family"/>
    <property type="match status" value="1"/>
</dbReference>
<dbReference type="FunFam" id="3.30.50.10:FF:000050">
    <property type="entry name" value="Nuclear Hormone Receptor family"/>
    <property type="match status" value="1"/>
</dbReference>
<dbReference type="Gene3D" id="3.30.50.10">
    <property type="entry name" value="Erythroid Transcription Factor GATA-1, subunit A"/>
    <property type="match status" value="1"/>
</dbReference>
<dbReference type="Gene3D" id="1.10.565.10">
    <property type="entry name" value="Retinoid X Receptor"/>
    <property type="match status" value="1"/>
</dbReference>
<dbReference type="InterPro" id="IPR049636">
    <property type="entry name" value="HNF4-like_DBD"/>
</dbReference>
<dbReference type="InterPro" id="IPR035500">
    <property type="entry name" value="NHR-like_dom_sf"/>
</dbReference>
<dbReference type="InterPro" id="IPR000536">
    <property type="entry name" value="Nucl_hrmn_rcpt_lig-bd"/>
</dbReference>
<dbReference type="InterPro" id="IPR050274">
    <property type="entry name" value="Nuclear_hormone_rcpt_NR2"/>
</dbReference>
<dbReference type="InterPro" id="IPR001723">
    <property type="entry name" value="Nuclear_hrmn_rcpt"/>
</dbReference>
<dbReference type="InterPro" id="IPR001628">
    <property type="entry name" value="Znf_hrmn_rcpt"/>
</dbReference>
<dbReference type="InterPro" id="IPR013088">
    <property type="entry name" value="Znf_NHR/GATA"/>
</dbReference>
<dbReference type="PANTHER" id="PTHR24083">
    <property type="entry name" value="NUCLEAR HORMONE RECEPTOR"/>
    <property type="match status" value="1"/>
</dbReference>
<dbReference type="Pfam" id="PF00104">
    <property type="entry name" value="Hormone_recep"/>
    <property type="match status" value="1"/>
</dbReference>
<dbReference type="Pfam" id="PF00105">
    <property type="entry name" value="zf-C4"/>
    <property type="match status" value="1"/>
</dbReference>
<dbReference type="PRINTS" id="PR00398">
    <property type="entry name" value="STRDHORMONER"/>
</dbReference>
<dbReference type="PRINTS" id="PR00047">
    <property type="entry name" value="STROIDFINGER"/>
</dbReference>
<dbReference type="SMART" id="SM00430">
    <property type="entry name" value="HOLI"/>
    <property type="match status" value="1"/>
</dbReference>
<dbReference type="SMART" id="SM00399">
    <property type="entry name" value="ZnF_C4"/>
    <property type="match status" value="1"/>
</dbReference>
<dbReference type="SUPFAM" id="SSF57716">
    <property type="entry name" value="Glucocorticoid receptor-like (DNA-binding domain)"/>
    <property type="match status" value="1"/>
</dbReference>
<dbReference type="SUPFAM" id="SSF48508">
    <property type="entry name" value="Nuclear receptor ligand-binding domain"/>
    <property type="match status" value="1"/>
</dbReference>
<dbReference type="PROSITE" id="PS51843">
    <property type="entry name" value="NR_LBD"/>
    <property type="match status" value="1"/>
</dbReference>
<dbReference type="PROSITE" id="PS00031">
    <property type="entry name" value="NUCLEAR_REC_DBD_1"/>
    <property type="match status" value="1"/>
</dbReference>
<dbReference type="PROSITE" id="PS51030">
    <property type="entry name" value="NUCLEAR_REC_DBD_2"/>
    <property type="match status" value="1"/>
</dbReference>
<evidence type="ECO:0000250" key="1">
    <source>
        <dbReference type="UniProtKB" id="P41235"/>
    </source>
</evidence>
<evidence type="ECO:0000255" key="2">
    <source>
        <dbReference type="PROSITE-ProRule" id="PRU00407"/>
    </source>
</evidence>
<evidence type="ECO:0000255" key="3">
    <source>
        <dbReference type="PROSITE-ProRule" id="PRU01189"/>
    </source>
</evidence>
<evidence type="ECO:0000255" key="4">
    <source>
        <dbReference type="RuleBase" id="RU004334"/>
    </source>
</evidence>
<evidence type="ECO:0000269" key="5">
    <source>
    </source>
</evidence>
<evidence type="ECO:0000305" key="6"/>
<evidence type="ECO:0000312" key="7">
    <source>
        <dbReference type="EMBL" id="CAB00125.2"/>
    </source>
</evidence>
<evidence type="ECO:0000312" key="8">
    <source>
        <dbReference type="Proteomes" id="UP000001940"/>
    </source>
</evidence>
<evidence type="ECO:0000312" key="9">
    <source>
        <dbReference type="WormBase" id="R07B7.16"/>
    </source>
</evidence>
<proteinExistence type="evidence at transcript level"/>
<reference evidence="8" key="1">
    <citation type="journal article" date="1998" name="Science">
        <title>Genome sequence of the nematode C. elegans: a platform for investigating biology.</title>
        <authorList>
            <consortium name="The C. elegans sequencing consortium"/>
        </authorList>
    </citation>
    <scope>NUCLEOTIDE SEQUENCE [LARGE SCALE GENOMIC DNA]</scope>
    <source>
        <strain evidence="8">Bristol N2</strain>
    </source>
</reference>
<reference evidence="6" key="2">
    <citation type="journal article" date="2018" name="Sci. Rep.">
        <title>Probiotic Lactobacillus fermentum strain JDFM216 stimulates the longevity and immune response of Caenorhabditis elegans through a nuclear hormone receptor.</title>
        <authorList>
            <person name="Park M.R."/>
            <person name="Ryu S."/>
            <person name="Maburutse B.E."/>
            <person name="Oh N.S."/>
            <person name="Kim S.H."/>
            <person name="Oh S."/>
            <person name="Jeong S.Y."/>
            <person name="Jeong D.Y."/>
            <person name="Oh S."/>
            <person name="Kim Y."/>
        </authorList>
    </citation>
    <scope>FUNCTION</scope>
    <scope>INDUCTION</scope>
</reference>
<feature type="chain" id="PRO_0000455560" description="Nuclear hormone receptor family member nhr-209">
    <location>
        <begin position="1"/>
        <end position="418"/>
    </location>
</feature>
<feature type="domain" description="NR LBD" evidence="3">
    <location>
        <begin position="174"/>
        <end position="414"/>
    </location>
</feature>
<feature type="DNA-binding region" description="Nuclear receptor" evidence="2">
    <location>
        <begin position="43"/>
        <end position="121"/>
    </location>
</feature>
<feature type="zinc finger region" description="NR C4-type" evidence="2">
    <location>
        <begin position="46"/>
        <end position="66"/>
    </location>
</feature>
<feature type="zinc finger region" description="NR C4-type" evidence="2">
    <location>
        <begin position="82"/>
        <end position="104"/>
    </location>
</feature>
<feature type="region of interest" description="AF-2" evidence="3">
    <location>
        <begin position="403"/>
        <end position="414"/>
    </location>
</feature>
<name>NH209_CAEEL</name>
<accession>Q21806</accession>
<sequence>MSFLVLPLHHSNETQSSSSALEKSIPEKDLKKPYQLLSKNQFPEKCAVCKNAAIGYHYNVPSCNGCKTFFRRTILNGKRFICMNHKNCLDEIESDESQRLCKGCRFARCIEVGMDSTAIRASVKTVEGKYLLEEVLRKQKNRKIQMQQKDNFLSLIIKQLSHLEDQIEKLHFSTIPDGFEDMRSLSEILLYNPVFDSSRIPNLTPVSNKAPKLICMTYMHSALLAAVEASKTFEFFSKISHEARMILIRHVSLIGSNMMSASFSMHHRKSDELLLPDGTVFGSIGGCLASEVLGEIKYKNQLQQILHAFLRINVDRVEYMILKAILMRNPSVPGLTLDDQLIIENERNQYAKALLEYTILHHGVLSGPARFGSLIAINPIIETQSKKQKDVYVFMKTLSAQRECSHPPKSLFDEVMDS</sequence>